<evidence type="ECO:0000305" key="1"/>
<feature type="chain" id="PRO_0000298655" description="Uncharacterized protein SAOUHSC_02143">
    <location>
        <begin position="1"/>
        <end position="342"/>
    </location>
</feature>
<gene>
    <name type="ordered locus">SAOUHSC_02143</name>
</gene>
<sequence>MTNGYIGSYTKKNGKGIYRFELNENQSRIDLLETGFELEASTYLVRNNEVLYGINKEGEQCGVASLKIDDNGELHLLNKCLSSKAGTGCYVSISEDKRYLFEAVYGAGIIRMYELNTHTGEIIRLIQELAHDFPTGTHERQDHPHAHYINQTPDGKYVAVTDLGADRIVTYKFDDNGFEFYKESLFKDSDGTRHIEFHDNGKFAYVVHELSNTVSVAEYNDGKFEELERHLTIPENFDGDTKLAAVRLSHDQQFLYVSNRGHDSIAIFKVLDNGQHLELVTITESGGQFPRDFNIASSDDLLVCAHEQGDSVVTVFERNKETGKITLCDNTRVASEGVCVIF</sequence>
<comment type="similarity">
    <text evidence="1">Belongs to the cycloisomerase 2 family.</text>
</comment>
<dbReference type="EMBL" id="CP000253">
    <property type="protein sequence ID" value="ABD31191.1"/>
    <property type="molecule type" value="Genomic_DNA"/>
</dbReference>
<dbReference type="RefSeq" id="WP_000181322.1">
    <property type="nucleotide sequence ID" value="NZ_LS483365.1"/>
</dbReference>
<dbReference type="RefSeq" id="YP_500633.1">
    <property type="nucleotide sequence ID" value="NC_007795.1"/>
</dbReference>
<dbReference type="SMR" id="Q2FWX8"/>
<dbReference type="STRING" id="93061.SAOUHSC_02143"/>
<dbReference type="PaxDb" id="1280-SAXN108_2024"/>
<dbReference type="GeneID" id="3921840"/>
<dbReference type="KEGG" id="sao:SAOUHSC_02143"/>
<dbReference type="PATRIC" id="fig|93061.5.peg.1944"/>
<dbReference type="eggNOG" id="COG2706">
    <property type="taxonomic scope" value="Bacteria"/>
</dbReference>
<dbReference type="HOGENOM" id="CLU_038716_3_0_9"/>
<dbReference type="OrthoDB" id="9790815at2"/>
<dbReference type="PRO" id="PR:Q2FWX8"/>
<dbReference type="Proteomes" id="UP000008816">
    <property type="component" value="Chromosome"/>
</dbReference>
<dbReference type="GO" id="GO:0005829">
    <property type="term" value="C:cytosol"/>
    <property type="evidence" value="ECO:0000318"/>
    <property type="project" value="GO_Central"/>
</dbReference>
<dbReference type="GO" id="GO:0017057">
    <property type="term" value="F:6-phosphogluconolactonase activity"/>
    <property type="evidence" value="ECO:0000318"/>
    <property type="project" value="GO_Central"/>
</dbReference>
<dbReference type="FunFam" id="2.130.10.10:FF:000822">
    <property type="entry name" value="3-carboxy-cis,cis-muconate lactonizing enzyme"/>
    <property type="match status" value="1"/>
</dbReference>
<dbReference type="Gene3D" id="2.130.10.10">
    <property type="entry name" value="YVTN repeat-like/Quinoprotein amine dehydrogenase"/>
    <property type="match status" value="1"/>
</dbReference>
<dbReference type="InterPro" id="IPR050282">
    <property type="entry name" value="Cycloisomerase_2"/>
</dbReference>
<dbReference type="InterPro" id="IPR019405">
    <property type="entry name" value="Lactonase_7-beta_prop"/>
</dbReference>
<dbReference type="InterPro" id="IPR011045">
    <property type="entry name" value="N2O_reductase_N"/>
</dbReference>
<dbReference type="InterPro" id="IPR015943">
    <property type="entry name" value="WD40/YVTN_repeat-like_dom_sf"/>
</dbReference>
<dbReference type="PANTHER" id="PTHR30344:SF1">
    <property type="entry name" value="6-PHOSPHOGLUCONOLACTONASE"/>
    <property type="match status" value="1"/>
</dbReference>
<dbReference type="PANTHER" id="PTHR30344">
    <property type="entry name" value="6-PHOSPHOGLUCONOLACTONASE-RELATED"/>
    <property type="match status" value="1"/>
</dbReference>
<dbReference type="Pfam" id="PF10282">
    <property type="entry name" value="Lactonase"/>
    <property type="match status" value="1"/>
</dbReference>
<dbReference type="SUPFAM" id="SSF50974">
    <property type="entry name" value="Nitrous oxide reductase, N-terminal domain"/>
    <property type="match status" value="1"/>
</dbReference>
<accession>Q2FWX8</accession>
<keyword id="KW-1185">Reference proteome</keyword>
<name>Y2143_STAA8</name>
<proteinExistence type="inferred from homology"/>
<organism>
    <name type="scientific">Staphylococcus aureus (strain NCTC 8325 / PS 47)</name>
    <dbReference type="NCBI Taxonomy" id="93061"/>
    <lineage>
        <taxon>Bacteria</taxon>
        <taxon>Bacillati</taxon>
        <taxon>Bacillota</taxon>
        <taxon>Bacilli</taxon>
        <taxon>Bacillales</taxon>
        <taxon>Staphylococcaceae</taxon>
        <taxon>Staphylococcus</taxon>
    </lineage>
</organism>
<reference key="1">
    <citation type="book" date="2006" name="Gram positive pathogens, 2nd edition">
        <title>The Staphylococcus aureus NCTC 8325 genome.</title>
        <editorList>
            <person name="Fischetti V."/>
            <person name="Novick R."/>
            <person name="Ferretti J."/>
            <person name="Portnoy D."/>
            <person name="Rood J."/>
        </editorList>
        <authorList>
            <person name="Gillaspy A.F."/>
            <person name="Worrell V."/>
            <person name="Orvis J."/>
            <person name="Roe B.A."/>
            <person name="Dyer D.W."/>
            <person name="Iandolo J.J."/>
        </authorList>
    </citation>
    <scope>NUCLEOTIDE SEQUENCE [LARGE SCALE GENOMIC DNA]</scope>
    <source>
        <strain>NCTC 8325 / PS 47</strain>
    </source>
</reference>
<protein>
    <recommendedName>
        <fullName>Uncharacterized protein SAOUHSC_02143</fullName>
    </recommendedName>
</protein>